<keyword id="KW-0963">Cytoplasm</keyword>
<keyword id="KW-0396">Initiation factor</keyword>
<keyword id="KW-0648">Protein biosynthesis</keyword>
<keyword id="KW-1185">Reference proteome</keyword>
<gene>
    <name evidence="1" type="primary">infC</name>
    <name type="ordered locus">Rleg2_4267</name>
</gene>
<organism>
    <name type="scientific">Rhizobium leguminosarum bv. trifolii (strain WSM2304)</name>
    <dbReference type="NCBI Taxonomy" id="395492"/>
    <lineage>
        <taxon>Bacteria</taxon>
        <taxon>Pseudomonadati</taxon>
        <taxon>Pseudomonadota</taxon>
        <taxon>Alphaproteobacteria</taxon>
        <taxon>Hyphomicrobiales</taxon>
        <taxon>Rhizobiaceae</taxon>
        <taxon>Rhizobium/Agrobacterium group</taxon>
        <taxon>Rhizobium</taxon>
    </lineage>
</organism>
<accession>B5ZXR7</accession>
<proteinExistence type="inferred from homology"/>
<dbReference type="EMBL" id="CP001191">
    <property type="protein sequence ID" value="ACI57526.1"/>
    <property type="molecule type" value="Genomic_DNA"/>
</dbReference>
<dbReference type="SMR" id="B5ZXR7"/>
<dbReference type="STRING" id="395492.Rleg2_4267"/>
<dbReference type="KEGG" id="rlt:Rleg2_4267"/>
<dbReference type="eggNOG" id="COG0290">
    <property type="taxonomic scope" value="Bacteria"/>
</dbReference>
<dbReference type="HOGENOM" id="CLU_054919_3_2_5"/>
<dbReference type="Proteomes" id="UP000008330">
    <property type="component" value="Chromosome"/>
</dbReference>
<dbReference type="GO" id="GO:0005829">
    <property type="term" value="C:cytosol"/>
    <property type="evidence" value="ECO:0007669"/>
    <property type="project" value="TreeGrafter"/>
</dbReference>
<dbReference type="GO" id="GO:0016020">
    <property type="term" value="C:membrane"/>
    <property type="evidence" value="ECO:0007669"/>
    <property type="project" value="TreeGrafter"/>
</dbReference>
<dbReference type="GO" id="GO:0043022">
    <property type="term" value="F:ribosome binding"/>
    <property type="evidence" value="ECO:0007669"/>
    <property type="project" value="TreeGrafter"/>
</dbReference>
<dbReference type="GO" id="GO:0003743">
    <property type="term" value="F:translation initiation factor activity"/>
    <property type="evidence" value="ECO:0007669"/>
    <property type="project" value="UniProtKB-UniRule"/>
</dbReference>
<dbReference type="GO" id="GO:0032790">
    <property type="term" value="P:ribosome disassembly"/>
    <property type="evidence" value="ECO:0007669"/>
    <property type="project" value="TreeGrafter"/>
</dbReference>
<dbReference type="FunFam" id="3.10.20.80:FF:000001">
    <property type="entry name" value="Translation initiation factor IF-3"/>
    <property type="match status" value="1"/>
</dbReference>
<dbReference type="FunFam" id="3.30.110.10:FF:000001">
    <property type="entry name" value="Translation initiation factor IF-3"/>
    <property type="match status" value="1"/>
</dbReference>
<dbReference type="Gene3D" id="3.30.110.10">
    <property type="entry name" value="Translation initiation factor 3 (IF-3), C-terminal domain"/>
    <property type="match status" value="1"/>
</dbReference>
<dbReference type="Gene3D" id="3.10.20.80">
    <property type="entry name" value="Translation initiation factor 3 (IF-3), N-terminal domain"/>
    <property type="match status" value="1"/>
</dbReference>
<dbReference type="HAMAP" id="MF_00080">
    <property type="entry name" value="IF_3"/>
    <property type="match status" value="1"/>
</dbReference>
<dbReference type="InterPro" id="IPR036788">
    <property type="entry name" value="T_IF-3_C_sf"/>
</dbReference>
<dbReference type="InterPro" id="IPR036787">
    <property type="entry name" value="T_IF-3_N_sf"/>
</dbReference>
<dbReference type="InterPro" id="IPR001288">
    <property type="entry name" value="Translation_initiation_fac_3"/>
</dbReference>
<dbReference type="InterPro" id="IPR019815">
    <property type="entry name" value="Translation_initiation_fac_3_C"/>
</dbReference>
<dbReference type="InterPro" id="IPR019814">
    <property type="entry name" value="Translation_initiation_fac_3_N"/>
</dbReference>
<dbReference type="NCBIfam" id="TIGR00168">
    <property type="entry name" value="infC"/>
    <property type="match status" value="1"/>
</dbReference>
<dbReference type="PANTHER" id="PTHR10938">
    <property type="entry name" value="TRANSLATION INITIATION FACTOR IF-3"/>
    <property type="match status" value="1"/>
</dbReference>
<dbReference type="PANTHER" id="PTHR10938:SF0">
    <property type="entry name" value="TRANSLATION INITIATION FACTOR IF-3, MITOCHONDRIAL"/>
    <property type="match status" value="1"/>
</dbReference>
<dbReference type="Pfam" id="PF00707">
    <property type="entry name" value="IF3_C"/>
    <property type="match status" value="1"/>
</dbReference>
<dbReference type="Pfam" id="PF05198">
    <property type="entry name" value="IF3_N"/>
    <property type="match status" value="1"/>
</dbReference>
<dbReference type="SUPFAM" id="SSF55200">
    <property type="entry name" value="Translation initiation factor IF3, C-terminal domain"/>
    <property type="match status" value="1"/>
</dbReference>
<dbReference type="SUPFAM" id="SSF54364">
    <property type="entry name" value="Translation initiation factor IF3, N-terminal domain"/>
    <property type="match status" value="1"/>
</dbReference>
<feature type="chain" id="PRO_1000092783" description="Translation initiation factor IF-3">
    <location>
        <begin position="1"/>
        <end position="178"/>
    </location>
</feature>
<feature type="region of interest" description="Disordered" evidence="2">
    <location>
        <begin position="1"/>
        <end position="20"/>
    </location>
</feature>
<evidence type="ECO:0000255" key="1">
    <source>
        <dbReference type="HAMAP-Rule" id="MF_00080"/>
    </source>
</evidence>
<evidence type="ECO:0000256" key="2">
    <source>
        <dbReference type="SAM" id="MobiDB-lite"/>
    </source>
</evidence>
<protein>
    <recommendedName>
        <fullName evidence="1">Translation initiation factor IF-3</fullName>
    </recommendedName>
</protein>
<reference key="1">
    <citation type="journal article" date="2010" name="Stand. Genomic Sci.">
        <title>Complete genome sequence of Rhizobium leguminosarum bv trifolii strain WSM2304, an effective microsymbiont of the South American clover Trifolium polymorphum.</title>
        <authorList>
            <person name="Reeve W."/>
            <person name="O'Hara G."/>
            <person name="Chain P."/>
            <person name="Ardley J."/>
            <person name="Brau L."/>
            <person name="Nandesena K."/>
            <person name="Tiwari R."/>
            <person name="Malfatti S."/>
            <person name="Kiss H."/>
            <person name="Lapidus A."/>
            <person name="Copeland A."/>
            <person name="Nolan M."/>
            <person name="Land M."/>
            <person name="Ivanova N."/>
            <person name="Mavromatis K."/>
            <person name="Markowitz V."/>
            <person name="Kyrpides N."/>
            <person name="Melino V."/>
            <person name="Denton M."/>
            <person name="Yates R."/>
            <person name="Howieson J."/>
        </authorList>
    </citation>
    <scope>NUCLEOTIDE SEQUENCE [LARGE SCALE GENOMIC DNA]</scope>
    <source>
        <strain>WSM2304</strain>
    </source>
</reference>
<comment type="function">
    <text evidence="1">IF-3 binds to the 30S ribosomal subunit and shifts the equilibrium between 70S ribosomes and their 50S and 30S subunits in favor of the free subunits, thus enhancing the availability of 30S subunits on which protein synthesis initiation begins.</text>
</comment>
<comment type="subunit">
    <text evidence="1">Monomer.</text>
</comment>
<comment type="subcellular location">
    <subcellularLocation>
        <location evidence="1">Cytoplasm</location>
    </subcellularLocation>
</comment>
<comment type="similarity">
    <text evidence="1">Belongs to the IF-3 family.</text>
</comment>
<sequence>MRRPFKTDAPVKDGPRSNREIRIPKVQLIGADGENMGVVPTDQALRMAEEAGLDLVEISPNVEPPVCKILDLGKLKYANQKKAAEARKKQKIVEVKEIKMRPNIDTHDYEVKMKAMGRFFDEGDKVKVTLKFRGREMAHQELGMKLLQQVKADTTEFAKVEAEPKLEGRQMMMVLAPK</sequence>
<name>IF3_RHILW</name>